<name>YFAP_ECOLI</name>
<proteinExistence type="inferred from homology"/>
<evidence type="ECO:0000255" key="1"/>
<feature type="signal peptide" evidence="1">
    <location>
        <begin position="1"/>
        <end position="19"/>
    </location>
</feature>
<feature type="chain" id="PRO_0000013875" description="Uncharacterized protein YfaP">
    <location>
        <begin position="20"/>
        <end position="258"/>
    </location>
</feature>
<keyword id="KW-1185">Reference proteome</keyword>
<keyword id="KW-0732">Signal</keyword>
<gene>
    <name type="primary">yfaP</name>
    <name type="ordered locus">b2225</name>
    <name type="ordered locus">JW2219</name>
</gene>
<dbReference type="EMBL" id="U00096">
    <property type="protein sequence ID" value="AAC75285.1"/>
    <property type="molecule type" value="Genomic_DNA"/>
</dbReference>
<dbReference type="EMBL" id="AP009048">
    <property type="protein sequence ID" value="BAE76669.1"/>
    <property type="molecule type" value="Genomic_DNA"/>
</dbReference>
<dbReference type="PIR" id="G64992">
    <property type="entry name" value="G64992"/>
</dbReference>
<dbReference type="RefSeq" id="NP_416729.1">
    <property type="nucleotide sequence ID" value="NC_000913.3"/>
</dbReference>
<dbReference type="RefSeq" id="WP_001225852.1">
    <property type="nucleotide sequence ID" value="NZ_SSZK01000030.1"/>
</dbReference>
<dbReference type="BioGRID" id="4263265">
    <property type="interactions" value="7"/>
</dbReference>
<dbReference type="FunCoup" id="P76462">
    <property type="interactions" value="80"/>
</dbReference>
<dbReference type="STRING" id="511145.b2225"/>
<dbReference type="PaxDb" id="511145-b2225"/>
<dbReference type="EnsemblBacteria" id="AAC75285">
    <property type="protein sequence ID" value="AAC75285"/>
    <property type="gene ID" value="b2225"/>
</dbReference>
<dbReference type="GeneID" id="946728"/>
<dbReference type="KEGG" id="ecj:JW2219"/>
<dbReference type="KEGG" id="eco:b2225"/>
<dbReference type="KEGG" id="ecoc:C3026_12435"/>
<dbReference type="PATRIC" id="fig|1411691.4.peg.10"/>
<dbReference type="EchoBASE" id="EB3831"/>
<dbReference type="eggNOG" id="COG4676">
    <property type="taxonomic scope" value="Bacteria"/>
</dbReference>
<dbReference type="HOGENOM" id="CLU_081783_0_0_6"/>
<dbReference type="InParanoid" id="P76462"/>
<dbReference type="OMA" id="QDVHYPA"/>
<dbReference type="OrthoDB" id="266279at2"/>
<dbReference type="PhylomeDB" id="P76462"/>
<dbReference type="BioCyc" id="EcoCyc:G7152-MONOMER"/>
<dbReference type="PRO" id="PR:P76462"/>
<dbReference type="Proteomes" id="UP000000625">
    <property type="component" value="Chromosome"/>
</dbReference>
<dbReference type="Gene3D" id="2.60.120.380">
    <property type="match status" value="1"/>
</dbReference>
<dbReference type="InterPro" id="IPR019220">
    <property type="entry name" value="DUF2135"/>
</dbReference>
<dbReference type="InterPro" id="IPR012039">
    <property type="entry name" value="UCP012281"/>
</dbReference>
<dbReference type="Pfam" id="PF09906">
    <property type="entry name" value="DUF2135"/>
    <property type="match status" value="1"/>
</dbReference>
<dbReference type="PIRSF" id="PIRSF012281">
    <property type="entry name" value="UCP012281"/>
    <property type="match status" value="1"/>
</dbReference>
<accession>P76462</accession>
<accession>Q2MAN7</accession>
<reference key="1">
    <citation type="journal article" date="1997" name="Science">
        <title>The complete genome sequence of Escherichia coli K-12.</title>
        <authorList>
            <person name="Blattner F.R."/>
            <person name="Plunkett G. III"/>
            <person name="Bloch C.A."/>
            <person name="Perna N.T."/>
            <person name="Burland V."/>
            <person name="Riley M."/>
            <person name="Collado-Vides J."/>
            <person name="Glasner J.D."/>
            <person name="Rode C.K."/>
            <person name="Mayhew G.F."/>
            <person name="Gregor J."/>
            <person name="Davis N.W."/>
            <person name="Kirkpatrick H.A."/>
            <person name="Goeden M.A."/>
            <person name="Rose D.J."/>
            <person name="Mau B."/>
            <person name="Shao Y."/>
        </authorList>
    </citation>
    <scope>NUCLEOTIDE SEQUENCE [LARGE SCALE GENOMIC DNA]</scope>
    <source>
        <strain>K12 / MG1655 / ATCC 47076</strain>
    </source>
</reference>
<reference key="2">
    <citation type="journal article" date="2006" name="Mol. Syst. Biol.">
        <title>Highly accurate genome sequences of Escherichia coli K-12 strains MG1655 and W3110.</title>
        <authorList>
            <person name="Hayashi K."/>
            <person name="Morooka N."/>
            <person name="Yamamoto Y."/>
            <person name="Fujita K."/>
            <person name="Isono K."/>
            <person name="Choi S."/>
            <person name="Ohtsubo E."/>
            <person name="Baba T."/>
            <person name="Wanner B.L."/>
            <person name="Mori H."/>
            <person name="Horiuchi T."/>
        </authorList>
    </citation>
    <scope>NUCLEOTIDE SEQUENCE [LARGE SCALE GENOMIC DNA]</scope>
    <source>
        <strain>K12 / W3110 / ATCC 27325 / DSM 5911</strain>
    </source>
</reference>
<organism>
    <name type="scientific">Escherichia coli (strain K12)</name>
    <dbReference type="NCBI Taxonomy" id="83333"/>
    <lineage>
        <taxon>Bacteria</taxon>
        <taxon>Pseudomonadati</taxon>
        <taxon>Pseudomonadota</taxon>
        <taxon>Gammaproteobacteria</taxon>
        <taxon>Enterobacterales</taxon>
        <taxon>Enterobacteriaceae</taxon>
        <taxon>Escherichia</taxon>
    </lineage>
</organism>
<sequence>MRKIFLPLLLVALSPVAHSEGVQEVEIDAPLSGWHPAEGEDASFSQSINYPASSVNMADDQNISAQIRGKIKNYAAAGKVQQGRLVVNGASMPQRIESDGSFARPYIFTEGSNSVQVISPDGQSRQKMQFYSTPGTGTIRARLRLVLSWDTDNTDLDLHVVTPDGEHAWYGNTVLKNSGALDMDVTTGYGPEIFAMPAPIHGRYQVYINYYGGRSETELTTAQLTLITDEGSVNEKQETFIVPMRNAGELTLVKSFDW</sequence>
<protein>
    <recommendedName>
        <fullName>Uncharacterized protein YfaP</fullName>
    </recommendedName>
</protein>